<proteinExistence type="inferred from homology"/>
<feature type="chain" id="PRO_0000273646" description="Exodeoxyribonuclease 7 large subunit">
    <location>
        <begin position="1"/>
        <end position="463"/>
    </location>
</feature>
<accession>Q7W7F4</accession>
<name>EX7L_BORPA</name>
<evidence type="ECO:0000255" key="1">
    <source>
        <dbReference type="HAMAP-Rule" id="MF_00378"/>
    </source>
</evidence>
<sequence length="463" mass="50263">MTIGLSVTNDVFARDILTVAQLNQAVGQLLERSIPSLWVRGEISNFTQAASGHWYFTLKDSRAAVRTVMFRSRAAQVGFVPRPGDQVEVRARVSLYEPRGDYQLQADGMRRAGVGNLYEAFLRLKAQLQDEGLFDPQRKRQPARLPRAIGVVTSLHAAALRDVLSALARRAPQVPVIIYPAPVQGADAAARLAARVAQANQRAEVDTLLLVRGGGSIEDLWSFNDEALAREVAASDIPVISGVGHETDFTIVDFVADLRAPTPTAAAELACVPRGDLLAALRHTAERLARAQQRRLDQAAQRLDRAAAMLTSPAQRLAHQQERLNTLRHRLASAWRGPQGRRVARLDMLAQRLAHRRPDTGRAAERSAALLAQLGRAQARLAAARQARLDTLAAQLRALDPQHTLARGYAIVRDAAGAIVTDATRLAARDRIEIAVARGRIGADVTDIGTPDGTDGNPALRRG</sequence>
<keyword id="KW-0963">Cytoplasm</keyword>
<keyword id="KW-0269">Exonuclease</keyword>
<keyword id="KW-0378">Hydrolase</keyword>
<keyword id="KW-0540">Nuclease</keyword>
<reference key="1">
    <citation type="journal article" date="2003" name="Nat. Genet.">
        <title>Comparative analysis of the genome sequences of Bordetella pertussis, Bordetella parapertussis and Bordetella bronchiseptica.</title>
        <authorList>
            <person name="Parkhill J."/>
            <person name="Sebaihia M."/>
            <person name="Preston A."/>
            <person name="Murphy L.D."/>
            <person name="Thomson N.R."/>
            <person name="Harris D.E."/>
            <person name="Holden M.T.G."/>
            <person name="Churcher C.M."/>
            <person name="Bentley S.D."/>
            <person name="Mungall K.L."/>
            <person name="Cerdeno-Tarraga A.-M."/>
            <person name="Temple L."/>
            <person name="James K.D."/>
            <person name="Harris B."/>
            <person name="Quail M.A."/>
            <person name="Achtman M."/>
            <person name="Atkin R."/>
            <person name="Baker S."/>
            <person name="Basham D."/>
            <person name="Bason N."/>
            <person name="Cherevach I."/>
            <person name="Chillingworth T."/>
            <person name="Collins M."/>
            <person name="Cronin A."/>
            <person name="Davis P."/>
            <person name="Doggett J."/>
            <person name="Feltwell T."/>
            <person name="Goble A."/>
            <person name="Hamlin N."/>
            <person name="Hauser H."/>
            <person name="Holroyd S."/>
            <person name="Jagels K."/>
            <person name="Leather S."/>
            <person name="Moule S."/>
            <person name="Norberczak H."/>
            <person name="O'Neil S."/>
            <person name="Ormond D."/>
            <person name="Price C."/>
            <person name="Rabbinowitsch E."/>
            <person name="Rutter S."/>
            <person name="Sanders M."/>
            <person name="Saunders D."/>
            <person name="Seeger K."/>
            <person name="Sharp S."/>
            <person name="Simmonds M."/>
            <person name="Skelton J."/>
            <person name="Squares R."/>
            <person name="Squares S."/>
            <person name="Stevens K."/>
            <person name="Unwin L."/>
            <person name="Whitehead S."/>
            <person name="Barrell B.G."/>
            <person name="Maskell D.J."/>
        </authorList>
    </citation>
    <scope>NUCLEOTIDE SEQUENCE [LARGE SCALE GENOMIC DNA]</scope>
    <source>
        <strain>12822 / ATCC BAA-587 / NCTC 13253</strain>
    </source>
</reference>
<gene>
    <name evidence="1" type="primary">xseA</name>
    <name type="ordered locus">BPP2566</name>
</gene>
<protein>
    <recommendedName>
        <fullName evidence="1">Exodeoxyribonuclease 7 large subunit</fullName>
        <ecNumber evidence="1">3.1.11.6</ecNumber>
    </recommendedName>
    <alternativeName>
        <fullName evidence="1">Exodeoxyribonuclease VII large subunit</fullName>
        <shortName evidence="1">Exonuclease VII large subunit</shortName>
    </alternativeName>
</protein>
<comment type="function">
    <text evidence="1">Bidirectionally degrades single-stranded DNA into large acid-insoluble oligonucleotides, which are then degraded further into small acid-soluble oligonucleotides.</text>
</comment>
<comment type="catalytic activity">
    <reaction evidence="1">
        <text>Exonucleolytic cleavage in either 5'- to 3'- or 3'- to 5'-direction to yield nucleoside 5'-phosphates.</text>
        <dbReference type="EC" id="3.1.11.6"/>
    </reaction>
</comment>
<comment type="subunit">
    <text evidence="1">Heterooligomer composed of large and small subunits.</text>
</comment>
<comment type="subcellular location">
    <subcellularLocation>
        <location evidence="1">Cytoplasm</location>
    </subcellularLocation>
</comment>
<comment type="similarity">
    <text evidence="1">Belongs to the XseA family.</text>
</comment>
<organism>
    <name type="scientific">Bordetella parapertussis (strain 12822 / ATCC BAA-587 / NCTC 13253)</name>
    <dbReference type="NCBI Taxonomy" id="257311"/>
    <lineage>
        <taxon>Bacteria</taxon>
        <taxon>Pseudomonadati</taxon>
        <taxon>Pseudomonadota</taxon>
        <taxon>Betaproteobacteria</taxon>
        <taxon>Burkholderiales</taxon>
        <taxon>Alcaligenaceae</taxon>
        <taxon>Bordetella</taxon>
    </lineage>
</organism>
<dbReference type="EC" id="3.1.11.6" evidence="1"/>
<dbReference type="EMBL" id="BX640430">
    <property type="protein sequence ID" value="CAE37860.1"/>
    <property type="molecule type" value="Genomic_DNA"/>
</dbReference>
<dbReference type="RefSeq" id="WP_003812887.1">
    <property type="nucleotide sequence ID" value="NC_002928.3"/>
</dbReference>
<dbReference type="SMR" id="Q7W7F4"/>
<dbReference type="GeneID" id="93204353"/>
<dbReference type="KEGG" id="bpa:BPP2566"/>
<dbReference type="HOGENOM" id="CLU_023625_3_1_4"/>
<dbReference type="Proteomes" id="UP000001421">
    <property type="component" value="Chromosome"/>
</dbReference>
<dbReference type="GO" id="GO:0005737">
    <property type="term" value="C:cytoplasm"/>
    <property type="evidence" value="ECO:0007669"/>
    <property type="project" value="UniProtKB-SubCell"/>
</dbReference>
<dbReference type="GO" id="GO:0009318">
    <property type="term" value="C:exodeoxyribonuclease VII complex"/>
    <property type="evidence" value="ECO:0007669"/>
    <property type="project" value="InterPro"/>
</dbReference>
<dbReference type="GO" id="GO:0008855">
    <property type="term" value="F:exodeoxyribonuclease VII activity"/>
    <property type="evidence" value="ECO:0007669"/>
    <property type="project" value="UniProtKB-UniRule"/>
</dbReference>
<dbReference type="GO" id="GO:0003676">
    <property type="term" value="F:nucleic acid binding"/>
    <property type="evidence" value="ECO:0007669"/>
    <property type="project" value="InterPro"/>
</dbReference>
<dbReference type="GO" id="GO:0006308">
    <property type="term" value="P:DNA catabolic process"/>
    <property type="evidence" value="ECO:0007669"/>
    <property type="project" value="UniProtKB-UniRule"/>
</dbReference>
<dbReference type="CDD" id="cd04489">
    <property type="entry name" value="ExoVII_LU_OBF"/>
    <property type="match status" value="1"/>
</dbReference>
<dbReference type="HAMAP" id="MF_00378">
    <property type="entry name" value="Exonuc_7_L"/>
    <property type="match status" value="1"/>
</dbReference>
<dbReference type="InterPro" id="IPR003753">
    <property type="entry name" value="Exonuc_VII_L"/>
</dbReference>
<dbReference type="InterPro" id="IPR020579">
    <property type="entry name" value="Exonuc_VII_lsu_C"/>
</dbReference>
<dbReference type="InterPro" id="IPR025824">
    <property type="entry name" value="OB-fold_nuc-bd_dom"/>
</dbReference>
<dbReference type="NCBIfam" id="TIGR00237">
    <property type="entry name" value="xseA"/>
    <property type="match status" value="1"/>
</dbReference>
<dbReference type="PANTHER" id="PTHR30008">
    <property type="entry name" value="EXODEOXYRIBONUCLEASE 7 LARGE SUBUNIT"/>
    <property type="match status" value="1"/>
</dbReference>
<dbReference type="PANTHER" id="PTHR30008:SF0">
    <property type="entry name" value="EXODEOXYRIBONUCLEASE 7 LARGE SUBUNIT"/>
    <property type="match status" value="1"/>
</dbReference>
<dbReference type="Pfam" id="PF02601">
    <property type="entry name" value="Exonuc_VII_L"/>
    <property type="match status" value="1"/>
</dbReference>
<dbReference type="Pfam" id="PF13742">
    <property type="entry name" value="tRNA_anti_2"/>
    <property type="match status" value="1"/>
</dbReference>